<feature type="chain" id="PRO_0000213963" description="Eukaryotic translation initiation factor 3 subunit H">
    <location>
        <begin position="1"/>
        <end position="337"/>
    </location>
</feature>
<feature type="domain" description="MPN" evidence="2">
    <location>
        <begin position="25"/>
        <end position="158"/>
    </location>
</feature>
<feature type="region of interest" description="Disordered" evidence="3">
    <location>
        <begin position="267"/>
        <end position="290"/>
    </location>
</feature>
<feature type="compositionally biased region" description="Basic and acidic residues" evidence="3">
    <location>
        <begin position="267"/>
        <end position="278"/>
    </location>
</feature>
<feature type="modified residue" description="Phosphoserine; by ATPK1" evidence="7">
    <location>
        <position position="178"/>
    </location>
</feature>
<feature type="splice variant" id="VSP_057957" description="In isoform 2.">
    <location>
        <begin position="1"/>
        <end position="87"/>
    </location>
</feature>
<feature type="mutagenesis site" description="Impaired activation of uORF-mRNA translation." evidence="7">
    <original>S</original>
    <variation>A</variation>
    <location>
        <position position="178"/>
    </location>
</feature>
<feature type="mutagenesis site" description="Phosphorylation mimic mutant, up-regulation of uORF-mRNA translation." evidence="7">
    <original>S</original>
    <variation>D</variation>
    <location>
        <position position="178"/>
    </location>
</feature>
<feature type="sequence conflict" description="In Ref. 1; AAG53614." evidence="8" ref="1">
    <original>V</original>
    <variation>L</variation>
    <location>
        <position position="146"/>
    </location>
</feature>
<evidence type="ECO:0000255" key="1">
    <source>
        <dbReference type="HAMAP-Rule" id="MF_03007"/>
    </source>
</evidence>
<evidence type="ECO:0000255" key="2">
    <source>
        <dbReference type="PROSITE-ProRule" id="PRU01182"/>
    </source>
</evidence>
<evidence type="ECO:0000256" key="3">
    <source>
        <dbReference type="SAM" id="MobiDB-lite"/>
    </source>
</evidence>
<evidence type="ECO:0000269" key="4">
    <source>
    </source>
</evidence>
<evidence type="ECO:0000269" key="5">
    <source>
    </source>
</evidence>
<evidence type="ECO:0000269" key="6">
    <source>
    </source>
</evidence>
<evidence type="ECO:0000269" key="7">
    <source>
    </source>
</evidence>
<evidence type="ECO:0000305" key="8"/>
<evidence type="ECO:0000312" key="9">
    <source>
        <dbReference type="EMBL" id="AAD31329.1"/>
    </source>
</evidence>
<evidence type="ECO:0000312" key="10">
    <source>
        <dbReference type="EMBL" id="AEE28653.1"/>
    </source>
</evidence>
<accession>Q9C5Z2</accession>
<accession>F4I5Y8</accession>
<accession>Q9SAB9</accession>
<gene>
    <name type="primary">TIF3H1</name>
    <name evidence="10" type="ordered locus">At1g10840</name>
    <name evidence="9" type="ORF">T16B5.2</name>
</gene>
<sequence length="337" mass="38373">MATMARSFLQAISKDEAVAPPLRVVQIEGLAVLKIIKHCKEFSPTLVTGQLLGLDVGSVLEVTNCFPFPVRDDDEEIEADGANYQLEMMRCLREVNVDNNTVGWYQSTVLGSYQTVELIETFMNYQENIKRCVCIIYDPSKADLGVLALKALKLSDSFMELYRGGNFTGEKLREKNFSWMDIFEEIPIKVSNSALVSAFMTELETDTPVSQGDYDRLHSSTTPFLENNMEFLIKCMDDLSMEQQKFQYYYRNLSRQQAQQQAWLQKRRTENMARKSAGEEPLPEEDPSNPIFKAIPEPSRLESFLITNQVSNFCGQINGVAGQNFSRLYLTKALHDN</sequence>
<comment type="function">
    <text evidence="1 4 5 7">Component of the eukaryotic translation initiation factor 3 (eIF-3) complex, which is involved in protein synthesis of a specialized repertoire of mRNAs and, together with other initiation factors, stimulates binding of mRNA and methionyl-tRNAi to the 40S ribosome. The eIF-3 complex specifically targets and initiates translation of a subset of mRNAs involved in cell proliferation (Potential). Regulates translation initiation of specific 5' mRNAs harboring multiple upstream open reading frames (uORFs) in their 5' leader sequence (e.g. BETA-OHASE 2 and LHY) (PubMed:15548739, PubMed:17439654, PubMed:23524850).</text>
</comment>
<comment type="subunit">
    <text evidence="1 4 6 7">Component of the eukaryotic translation initiation factor 3 (eIF-3) complex. Interacts directly with TIF3A1, TIF3B1, TIF3C1, TIF3E1 and TIF3F1 (PubMed:15548739, PubMed:20444226). Associates with the CSN (COP9 signalosome) complex. Binds to CSN1, CSN7 and CSN8 (PubMed:15548739). Interacts with ATPK1 (PubMed:23524850).</text>
</comment>
<comment type="interaction">
    <interactant intactId="EBI-3387106">
        <id>Q9C5Z2</id>
    </interactant>
    <interactant intactId="EBI-8107038">
        <id>P42818</id>
        <label>ATPK1</label>
    </interactant>
    <organismsDiffer>false</organismsDiffer>
    <experiments>3</experiments>
</comment>
<comment type="subcellular location">
    <subcellularLocation>
        <location evidence="1">Cytoplasm</location>
    </subcellularLocation>
</comment>
<comment type="alternative products">
    <event type="alternative splicing"/>
    <isoform>
        <id>Q9C5Z2-1</id>
        <name>1</name>
        <sequence type="displayed"/>
    </isoform>
    <isoform>
        <id>Q9C5Z2-2</id>
        <name>2</name>
        <sequence type="described" ref="VSP_057957"/>
    </isoform>
</comment>
<comment type="tissue specificity">
    <text evidence="4">Mostly expressed in roots and flowers, and, to a lower extent, in leaves, stems and siliques.</text>
</comment>
<comment type="PTM">
    <text evidence="7">In response to auxin (NAA), phosphorylated at Ser-178 by ATPK1 and binds to polysomes via TOR signaling. This phosphorylation is repressed by Torin-1.</text>
</comment>
<comment type="disruption phenotype">
    <text evidence="4 7">Pleiotropic growth defects throughout development including postembryonic growth retardation, and delayed shoot and root growth, flowering, and senescence. Lethal at 80 percent at the vegetative rosettes stage. Reduced fertility. Compromised translation efficiency of specific 5' mRNA leader sequences. Requires exogenous sugar to transit from seedling to vegetative development, but hypersensitive to elevated levels of exogenous sugars (e.g. sucrose, maltose and glucose). Enhanced sensitivity to abscisic acid (ABA) (PubMed:15548739). Impaired uORF-RNAs polysomal association (PubMed:23524850).</text>
</comment>
<comment type="similarity">
    <text evidence="1">Belongs to the eIF-3 subunit H family.</text>
</comment>
<dbReference type="EMBL" id="AF285833">
    <property type="protein sequence ID" value="AAG53614.1"/>
    <property type="molecule type" value="mRNA"/>
</dbReference>
<dbReference type="EMBL" id="AC007354">
    <property type="protein sequence ID" value="AAD31329.1"/>
    <property type="molecule type" value="Genomic_DNA"/>
</dbReference>
<dbReference type="EMBL" id="CP002684">
    <property type="protein sequence ID" value="AEE28653.1"/>
    <property type="molecule type" value="Genomic_DNA"/>
</dbReference>
<dbReference type="EMBL" id="CP002684">
    <property type="protein sequence ID" value="AEE28654.1"/>
    <property type="molecule type" value="Genomic_DNA"/>
</dbReference>
<dbReference type="EMBL" id="AY054641">
    <property type="protein sequence ID" value="AAK96832.1"/>
    <property type="molecule type" value="mRNA"/>
</dbReference>
<dbReference type="EMBL" id="AY081546">
    <property type="protein sequence ID" value="AAM10108.1"/>
    <property type="molecule type" value="mRNA"/>
</dbReference>
<dbReference type="EMBL" id="BT000765">
    <property type="protein sequence ID" value="AAN31904.1"/>
    <property type="molecule type" value="mRNA"/>
</dbReference>
<dbReference type="EMBL" id="AY087338">
    <property type="protein sequence ID" value="AAM64888.1"/>
    <property type="molecule type" value="mRNA"/>
</dbReference>
<dbReference type="PIR" id="B86242">
    <property type="entry name" value="B86242"/>
</dbReference>
<dbReference type="RefSeq" id="NP_563880.1">
    <molecule id="Q9C5Z2-1"/>
    <property type="nucleotide sequence ID" value="NM_100960.3"/>
</dbReference>
<dbReference type="RefSeq" id="NP_973808.1">
    <molecule id="Q9C5Z2-2"/>
    <property type="nucleotide sequence ID" value="NM_202079.1"/>
</dbReference>
<dbReference type="SMR" id="Q9C5Z2"/>
<dbReference type="BioGRID" id="22867">
    <property type="interactions" value="34"/>
</dbReference>
<dbReference type="FunCoup" id="Q9C5Z2">
    <property type="interactions" value="5059"/>
</dbReference>
<dbReference type="IntAct" id="Q9C5Z2">
    <property type="interactions" value="4"/>
</dbReference>
<dbReference type="MINT" id="Q9C5Z2"/>
<dbReference type="STRING" id="3702.Q9C5Z2"/>
<dbReference type="MEROPS" id="M67.971"/>
<dbReference type="iPTMnet" id="Q9C5Z2"/>
<dbReference type="PaxDb" id="3702-AT1G10840.1"/>
<dbReference type="ProteomicsDB" id="220755">
    <molecule id="Q9C5Z2-1"/>
</dbReference>
<dbReference type="EnsemblPlants" id="AT1G10840.1">
    <molecule id="Q9C5Z2-1"/>
    <property type="protein sequence ID" value="AT1G10840.1"/>
    <property type="gene ID" value="AT1G10840"/>
</dbReference>
<dbReference type="EnsemblPlants" id="AT1G10840.2">
    <molecule id="Q9C5Z2-2"/>
    <property type="protein sequence ID" value="AT1G10840.2"/>
    <property type="gene ID" value="AT1G10840"/>
</dbReference>
<dbReference type="GeneID" id="837627"/>
<dbReference type="Gramene" id="AT1G10840.1">
    <molecule id="Q9C5Z2-1"/>
    <property type="protein sequence ID" value="AT1G10840.1"/>
    <property type="gene ID" value="AT1G10840"/>
</dbReference>
<dbReference type="Gramene" id="AT1G10840.2">
    <molecule id="Q9C5Z2-2"/>
    <property type="protein sequence ID" value="AT1G10840.2"/>
    <property type="gene ID" value="AT1G10840"/>
</dbReference>
<dbReference type="KEGG" id="ath:AT1G10840"/>
<dbReference type="Araport" id="AT1G10840"/>
<dbReference type="TAIR" id="AT1G10840">
    <property type="gene designation" value="TIF3H1"/>
</dbReference>
<dbReference type="eggNOG" id="KOG1560">
    <property type="taxonomic scope" value="Eukaryota"/>
</dbReference>
<dbReference type="HOGENOM" id="CLU_044094_0_0_1"/>
<dbReference type="InParanoid" id="Q9C5Z2"/>
<dbReference type="OMA" id="WYQSTYF"/>
<dbReference type="OrthoDB" id="1035160at2759"/>
<dbReference type="PhylomeDB" id="Q9C5Z2"/>
<dbReference type="PRO" id="PR:Q9C5Z2"/>
<dbReference type="Proteomes" id="UP000006548">
    <property type="component" value="Chromosome 1"/>
</dbReference>
<dbReference type="ExpressionAtlas" id="Q9C5Z2">
    <property type="expression patterns" value="baseline and differential"/>
</dbReference>
<dbReference type="GO" id="GO:0016282">
    <property type="term" value="C:eukaryotic 43S preinitiation complex"/>
    <property type="evidence" value="ECO:0007669"/>
    <property type="project" value="UniProtKB-UniRule"/>
</dbReference>
<dbReference type="GO" id="GO:0033290">
    <property type="term" value="C:eukaryotic 48S preinitiation complex"/>
    <property type="evidence" value="ECO:0007669"/>
    <property type="project" value="UniProtKB-UniRule"/>
</dbReference>
<dbReference type="GO" id="GO:0005852">
    <property type="term" value="C:eukaryotic translation initiation factor 3 complex"/>
    <property type="evidence" value="ECO:0007669"/>
    <property type="project" value="UniProtKB-UniRule"/>
</dbReference>
<dbReference type="GO" id="GO:0005576">
    <property type="term" value="C:extracellular region"/>
    <property type="evidence" value="ECO:0007005"/>
    <property type="project" value="TAIR"/>
</dbReference>
<dbReference type="GO" id="GO:0005840">
    <property type="term" value="C:ribosome"/>
    <property type="evidence" value="ECO:0000314"/>
    <property type="project" value="UniProtKB"/>
</dbReference>
<dbReference type="GO" id="GO:0008237">
    <property type="term" value="F:metallopeptidase activity"/>
    <property type="evidence" value="ECO:0007669"/>
    <property type="project" value="InterPro"/>
</dbReference>
<dbReference type="GO" id="GO:0003729">
    <property type="term" value="F:mRNA binding"/>
    <property type="evidence" value="ECO:0000314"/>
    <property type="project" value="TAIR"/>
</dbReference>
<dbReference type="GO" id="GO:0003743">
    <property type="term" value="F:translation initiation factor activity"/>
    <property type="evidence" value="ECO:0007669"/>
    <property type="project" value="UniProtKB-UniRule"/>
</dbReference>
<dbReference type="GO" id="GO:0009738">
    <property type="term" value="P:abscisic acid-activated signaling pathway"/>
    <property type="evidence" value="ECO:0007669"/>
    <property type="project" value="UniProtKB-KW"/>
</dbReference>
<dbReference type="GO" id="GO:0001732">
    <property type="term" value="P:formation of cytoplasmic translation initiation complex"/>
    <property type="evidence" value="ECO:0007669"/>
    <property type="project" value="UniProtKB-UniRule"/>
</dbReference>
<dbReference type="GO" id="GO:0045948">
    <property type="term" value="P:positive regulation of translational initiation"/>
    <property type="evidence" value="ECO:0000315"/>
    <property type="project" value="UniProtKB"/>
</dbReference>
<dbReference type="GO" id="GO:0009737">
    <property type="term" value="P:response to abscisic acid"/>
    <property type="evidence" value="ECO:0000315"/>
    <property type="project" value="UniProtKB"/>
</dbReference>
<dbReference type="GO" id="GO:0009733">
    <property type="term" value="P:response to auxin"/>
    <property type="evidence" value="ECO:0000315"/>
    <property type="project" value="UniProtKB"/>
</dbReference>
<dbReference type="GO" id="GO:0009749">
    <property type="term" value="P:response to glucose"/>
    <property type="evidence" value="ECO:0000315"/>
    <property type="project" value="UniProtKB"/>
</dbReference>
<dbReference type="GO" id="GO:0034286">
    <property type="term" value="P:response to maltose"/>
    <property type="evidence" value="ECO:0000315"/>
    <property type="project" value="UniProtKB"/>
</dbReference>
<dbReference type="GO" id="GO:0009744">
    <property type="term" value="P:response to sucrose"/>
    <property type="evidence" value="ECO:0000315"/>
    <property type="project" value="UniProtKB"/>
</dbReference>
<dbReference type="CDD" id="cd08065">
    <property type="entry name" value="MPN_eIF3h"/>
    <property type="match status" value="1"/>
</dbReference>
<dbReference type="FunFam" id="3.40.140.10:FF:000023">
    <property type="entry name" value="Eukaryotic translation initiation factor 3 subunit H"/>
    <property type="match status" value="1"/>
</dbReference>
<dbReference type="Gene3D" id="3.40.140.10">
    <property type="entry name" value="Cytidine Deaminase, domain 2"/>
    <property type="match status" value="1"/>
</dbReference>
<dbReference type="HAMAP" id="MF_03007">
    <property type="entry name" value="eIF3h"/>
    <property type="match status" value="1"/>
</dbReference>
<dbReference type="InterPro" id="IPR027524">
    <property type="entry name" value="eIF3h"/>
</dbReference>
<dbReference type="InterPro" id="IPR045810">
    <property type="entry name" value="eIF3h_C"/>
</dbReference>
<dbReference type="InterPro" id="IPR000555">
    <property type="entry name" value="JAMM/MPN+_dom"/>
</dbReference>
<dbReference type="InterPro" id="IPR050242">
    <property type="entry name" value="JAMM_MPN+_peptidase_M67A"/>
</dbReference>
<dbReference type="InterPro" id="IPR037518">
    <property type="entry name" value="MPN"/>
</dbReference>
<dbReference type="PANTHER" id="PTHR10410">
    <property type="entry name" value="EUKARYOTIC TRANSLATION INITIATION FACTOR 3 -RELATED"/>
    <property type="match status" value="1"/>
</dbReference>
<dbReference type="Pfam" id="PF19445">
    <property type="entry name" value="eIF3h_C"/>
    <property type="match status" value="1"/>
</dbReference>
<dbReference type="Pfam" id="PF01398">
    <property type="entry name" value="JAB"/>
    <property type="match status" value="1"/>
</dbReference>
<dbReference type="SMART" id="SM00232">
    <property type="entry name" value="JAB_MPN"/>
    <property type="match status" value="1"/>
</dbReference>
<dbReference type="PROSITE" id="PS50249">
    <property type="entry name" value="MPN"/>
    <property type="match status" value="1"/>
</dbReference>
<keyword id="KW-0938">Abscisic acid signaling pathway</keyword>
<keyword id="KW-0025">Alternative splicing</keyword>
<keyword id="KW-0963">Cytoplasm</keyword>
<keyword id="KW-0396">Initiation factor</keyword>
<keyword id="KW-0597">Phosphoprotein</keyword>
<keyword id="KW-0648">Protein biosynthesis</keyword>
<keyword id="KW-1185">Reference proteome</keyword>
<keyword id="KW-0810">Translation regulation</keyword>
<name>EIF3H_ARATH</name>
<organism>
    <name type="scientific">Arabidopsis thaliana</name>
    <name type="common">Mouse-ear cress</name>
    <dbReference type="NCBI Taxonomy" id="3702"/>
    <lineage>
        <taxon>Eukaryota</taxon>
        <taxon>Viridiplantae</taxon>
        <taxon>Streptophyta</taxon>
        <taxon>Embryophyta</taxon>
        <taxon>Tracheophyta</taxon>
        <taxon>Spermatophyta</taxon>
        <taxon>Magnoliopsida</taxon>
        <taxon>eudicotyledons</taxon>
        <taxon>Gunneridae</taxon>
        <taxon>Pentapetalae</taxon>
        <taxon>rosids</taxon>
        <taxon>malvids</taxon>
        <taxon>Brassicales</taxon>
        <taxon>Brassicaceae</taxon>
        <taxon>Camelineae</taxon>
        <taxon>Arabidopsis</taxon>
    </lineage>
</organism>
<proteinExistence type="evidence at protein level"/>
<protein>
    <recommendedName>
        <fullName evidence="1">Eukaryotic translation initiation factor 3 subunit H</fullName>
        <shortName evidence="1">eIF3h</shortName>
    </recommendedName>
    <alternativeName>
        <fullName evidence="1">Eukaryotic translation initiation factor 3 subunit 3</fullName>
    </alternativeName>
    <alternativeName>
        <fullName>eIF-3-gamma</fullName>
    </alternativeName>
    <alternativeName>
        <fullName>eIF3 p38 subunit</fullName>
    </alternativeName>
</protein>
<reference key="1">
    <citation type="journal article" date="2001" name="J. Biol. Chem.">
        <title>Plant initiation factor 3 subunit composition resembles mammalian initiation factor 3 and has a novel subunit.</title>
        <authorList>
            <person name="Burks E.A."/>
            <person name="Bezerra P.P."/>
            <person name="Le H."/>
            <person name="Gallie D.R."/>
            <person name="Browning K.S."/>
        </authorList>
    </citation>
    <scope>NUCLEOTIDE SEQUENCE [MRNA]</scope>
    <source>
        <strain>cv. Columbia</strain>
    </source>
</reference>
<reference key="2">
    <citation type="journal article" date="2000" name="Nature">
        <title>Sequence and analysis of chromosome 1 of the plant Arabidopsis thaliana.</title>
        <authorList>
            <person name="Theologis A."/>
            <person name="Ecker J.R."/>
            <person name="Palm C.J."/>
            <person name="Federspiel N.A."/>
            <person name="Kaul S."/>
            <person name="White O."/>
            <person name="Alonso J."/>
            <person name="Altafi H."/>
            <person name="Araujo R."/>
            <person name="Bowman C.L."/>
            <person name="Brooks S.Y."/>
            <person name="Buehler E."/>
            <person name="Chan A."/>
            <person name="Chao Q."/>
            <person name="Chen H."/>
            <person name="Cheuk R.F."/>
            <person name="Chin C.W."/>
            <person name="Chung M.K."/>
            <person name="Conn L."/>
            <person name="Conway A.B."/>
            <person name="Conway A.R."/>
            <person name="Creasy T.H."/>
            <person name="Dewar K."/>
            <person name="Dunn P."/>
            <person name="Etgu P."/>
            <person name="Feldblyum T.V."/>
            <person name="Feng J.-D."/>
            <person name="Fong B."/>
            <person name="Fujii C.Y."/>
            <person name="Gill J.E."/>
            <person name="Goldsmith A.D."/>
            <person name="Haas B."/>
            <person name="Hansen N.F."/>
            <person name="Hughes B."/>
            <person name="Huizar L."/>
            <person name="Hunter J.L."/>
            <person name="Jenkins J."/>
            <person name="Johnson-Hopson C."/>
            <person name="Khan S."/>
            <person name="Khaykin E."/>
            <person name="Kim C.J."/>
            <person name="Koo H.L."/>
            <person name="Kremenetskaia I."/>
            <person name="Kurtz D.B."/>
            <person name="Kwan A."/>
            <person name="Lam B."/>
            <person name="Langin-Hooper S."/>
            <person name="Lee A."/>
            <person name="Lee J.M."/>
            <person name="Lenz C.A."/>
            <person name="Li J.H."/>
            <person name="Li Y.-P."/>
            <person name="Lin X."/>
            <person name="Liu S.X."/>
            <person name="Liu Z.A."/>
            <person name="Luros J.S."/>
            <person name="Maiti R."/>
            <person name="Marziali A."/>
            <person name="Militscher J."/>
            <person name="Miranda M."/>
            <person name="Nguyen M."/>
            <person name="Nierman W.C."/>
            <person name="Osborne B.I."/>
            <person name="Pai G."/>
            <person name="Peterson J."/>
            <person name="Pham P.K."/>
            <person name="Rizzo M."/>
            <person name="Rooney T."/>
            <person name="Rowley D."/>
            <person name="Sakano H."/>
            <person name="Salzberg S.L."/>
            <person name="Schwartz J.R."/>
            <person name="Shinn P."/>
            <person name="Southwick A.M."/>
            <person name="Sun H."/>
            <person name="Tallon L.J."/>
            <person name="Tambunga G."/>
            <person name="Toriumi M.J."/>
            <person name="Town C.D."/>
            <person name="Utterback T."/>
            <person name="Van Aken S."/>
            <person name="Vaysberg M."/>
            <person name="Vysotskaia V.S."/>
            <person name="Walker M."/>
            <person name="Wu D."/>
            <person name="Yu G."/>
            <person name="Fraser C.M."/>
            <person name="Venter J.C."/>
            <person name="Davis R.W."/>
        </authorList>
    </citation>
    <scope>NUCLEOTIDE SEQUENCE [LARGE SCALE GENOMIC DNA]</scope>
    <source>
        <strain>cv. Columbia</strain>
    </source>
</reference>
<reference key="3">
    <citation type="journal article" date="2017" name="Plant J.">
        <title>Araport11: a complete reannotation of the Arabidopsis thaliana reference genome.</title>
        <authorList>
            <person name="Cheng C.Y."/>
            <person name="Krishnakumar V."/>
            <person name="Chan A.P."/>
            <person name="Thibaud-Nissen F."/>
            <person name="Schobel S."/>
            <person name="Town C.D."/>
        </authorList>
    </citation>
    <scope>GENOME REANNOTATION</scope>
    <source>
        <strain>cv. Columbia</strain>
    </source>
</reference>
<reference key="4">
    <citation type="journal article" date="2003" name="Science">
        <title>Empirical analysis of transcriptional activity in the Arabidopsis genome.</title>
        <authorList>
            <person name="Yamada K."/>
            <person name="Lim J."/>
            <person name="Dale J.M."/>
            <person name="Chen H."/>
            <person name="Shinn P."/>
            <person name="Palm C.J."/>
            <person name="Southwick A.M."/>
            <person name="Wu H.C."/>
            <person name="Kim C.J."/>
            <person name="Nguyen M."/>
            <person name="Pham P.K."/>
            <person name="Cheuk R.F."/>
            <person name="Karlin-Newmann G."/>
            <person name="Liu S.X."/>
            <person name="Lam B."/>
            <person name="Sakano H."/>
            <person name="Wu T."/>
            <person name="Yu G."/>
            <person name="Miranda M."/>
            <person name="Quach H.L."/>
            <person name="Tripp M."/>
            <person name="Chang C.H."/>
            <person name="Lee J.M."/>
            <person name="Toriumi M.J."/>
            <person name="Chan M.M."/>
            <person name="Tang C.C."/>
            <person name="Onodera C.S."/>
            <person name="Deng J.M."/>
            <person name="Akiyama K."/>
            <person name="Ansari Y."/>
            <person name="Arakawa T."/>
            <person name="Banh J."/>
            <person name="Banno F."/>
            <person name="Bowser L."/>
            <person name="Brooks S.Y."/>
            <person name="Carninci P."/>
            <person name="Chao Q."/>
            <person name="Choy N."/>
            <person name="Enju A."/>
            <person name="Goldsmith A.D."/>
            <person name="Gurjal M."/>
            <person name="Hansen N.F."/>
            <person name="Hayashizaki Y."/>
            <person name="Johnson-Hopson C."/>
            <person name="Hsuan V.W."/>
            <person name="Iida K."/>
            <person name="Karnes M."/>
            <person name="Khan S."/>
            <person name="Koesema E."/>
            <person name="Ishida J."/>
            <person name="Jiang P.X."/>
            <person name="Jones T."/>
            <person name="Kawai J."/>
            <person name="Kamiya A."/>
            <person name="Meyers C."/>
            <person name="Nakajima M."/>
            <person name="Narusaka M."/>
            <person name="Seki M."/>
            <person name="Sakurai T."/>
            <person name="Satou M."/>
            <person name="Tamse R."/>
            <person name="Vaysberg M."/>
            <person name="Wallender E.K."/>
            <person name="Wong C."/>
            <person name="Yamamura Y."/>
            <person name="Yuan S."/>
            <person name="Shinozaki K."/>
            <person name="Davis R.W."/>
            <person name="Theologis A."/>
            <person name="Ecker J.R."/>
        </authorList>
    </citation>
    <scope>NUCLEOTIDE SEQUENCE [LARGE SCALE MRNA]</scope>
    <source>
        <strain>cv. Columbia</strain>
    </source>
</reference>
<reference key="5">
    <citation type="submission" date="2002-03" db="EMBL/GenBank/DDBJ databases">
        <title>Full-length cDNA from Arabidopsis thaliana.</title>
        <authorList>
            <person name="Brover V.V."/>
            <person name="Troukhan M.E."/>
            <person name="Alexandrov N.A."/>
            <person name="Lu Y.-P."/>
            <person name="Flavell R.B."/>
            <person name="Feldmann K.A."/>
        </authorList>
    </citation>
    <scope>NUCLEOTIDE SEQUENCE [LARGE SCALE MRNA]</scope>
</reference>
<reference key="6">
    <citation type="journal article" date="2004" name="Plant Cell">
        <title>Translational regulation via 5' mRNA leader sequences revealed by mutational analysis of the Arabidopsis translation initiation factor subunit eIF3h.</title>
        <authorList>
            <person name="Kim T.-H."/>
            <person name="Kim B.-H."/>
            <person name="Yahalom A."/>
            <person name="Chamovitz D.A."/>
            <person name="von Arnim A.G."/>
        </authorList>
    </citation>
    <scope>FUNCTION</scope>
    <scope>DISRUPTION PHENOTYPE</scope>
    <scope>TISSUE SPECIFICITY</scope>
    <scope>INTERACTION WITH CSN1; CSN7; CSN8; TIF3A1; TIF3B1; TIF3C1 AND TIF3E1</scope>
</reference>
<reference key="7">
    <citation type="journal article" date="2007" name="Genome Biol.">
        <title>On the functions of the h subunit of eukaryotic initiation factor 3 in late stages of translation initiation.</title>
        <authorList>
            <person name="Kim B.-H."/>
            <person name="Cai X."/>
            <person name="Vaughn J.N."/>
            <person name="von Arnim A.G."/>
        </authorList>
    </citation>
    <scope>FUNCTION</scope>
    <source>
        <strain>cv. Wassilewskija</strain>
    </source>
</reference>
<reference key="8">
    <citation type="journal article" date="2010" name="Plant J.">
        <title>The Arabidopsis eukaryotic translation initiation factor 3, subunit F (AteIF3f), is required for pollen germination and embryogenesis.</title>
        <authorList>
            <person name="Xia C."/>
            <person name="Wang Y.-J."/>
            <person name="Li W.-Q."/>
            <person name="Chen Y.-R."/>
            <person name="Deng Y."/>
            <person name="Zhang X.-Q."/>
            <person name="Chen L.-Q."/>
            <person name="Ye D."/>
        </authorList>
    </citation>
    <scope>INTERACTION WITH TIF3F1</scope>
</reference>
<reference key="9">
    <citation type="journal article" date="2013" name="EMBO J.">
        <title>TOR and S6K1 promote translation reinitiation of uORF-containing mRNAs via phosphorylation of eIF3h.</title>
        <authorList>
            <person name="Schepetilnikov M."/>
            <person name="Dimitrova M."/>
            <person name="Mancera-Martinez E."/>
            <person name="Geldreich A."/>
            <person name="Keller M."/>
            <person name="Ryabova L.A."/>
        </authorList>
    </citation>
    <scope>FUNCTION</scope>
    <scope>DISRUPTION PHENOTYPE</scope>
    <scope>PHOSPHORYLATION AT SER-178 BY ATPK1</scope>
    <scope>MUTAGENESIS OF SER-178</scope>
    <scope>INTERACTION WITH ATPK1</scope>
</reference>